<protein>
    <recommendedName>
        <fullName evidence="1">Large ribosomal subunit protein uL2</fullName>
    </recommendedName>
    <alternativeName>
        <fullName evidence="3">50S ribosomal protein L2</fullName>
    </alternativeName>
</protein>
<sequence>MGIKVYKPTTNGRRNMTSLDFAEITTSTPEKSLLVSLKSKAGRNNNGRITVRHQGGGHKRHYRLIDFKRNKDGVEAVVKTIEYDPNRTANIALVHYTDGVKAYIIAPKGLEVGQRIVSGPDADIKVGNALPLANIPVGTVVHNIELKPGKGGELVRAAGASAQVLGQEGKYVLVRLQSGEVRMILGTCRATIGTVGNEQQSLVNIGKAGRSRWKGIRPTVRGSVMNPNDHPHGGGEGKAPVGRKAPSTPWGKPALGLKTRNKKAKSDKLIVRRRNEK</sequence>
<proteinExistence type="inferred from homology"/>
<comment type="function">
    <text evidence="1">One of the primary rRNA binding proteins. Required for association of the 30S and 50S subunits to form the 70S ribosome, for tRNA binding and peptide bond formation. It has been suggested to have peptidyltransferase activity; this is somewhat controversial. Makes several contacts with the 16S rRNA in the 70S ribosome.</text>
</comment>
<comment type="subunit">
    <text evidence="1">Part of the 50S ribosomal subunit. Forms a bridge to the 30S subunit in the 70S ribosome.</text>
</comment>
<comment type="similarity">
    <text evidence="1">Belongs to the universal ribosomal protein uL2 family.</text>
</comment>
<reference key="1">
    <citation type="journal article" date="2001" name="Proc. Natl. Acad. Sci. U.S.A.">
        <title>Complete genome sequence of an M1 strain of Streptococcus pyogenes.</title>
        <authorList>
            <person name="Ferretti J.J."/>
            <person name="McShan W.M."/>
            <person name="Ajdic D.J."/>
            <person name="Savic D.J."/>
            <person name="Savic G."/>
            <person name="Lyon K."/>
            <person name="Primeaux C."/>
            <person name="Sezate S."/>
            <person name="Suvorov A.N."/>
            <person name="Kenton S."/>
            <person name="Lai H.S."/>
            <person name="Lin S.P."/>
            <person name="Qian Y."/>
            <person name="Jia H.G."/>
            <person name="Najar F.Z."/>
            <person name="Ren Q."/>
            <person name="Zhu H."/>
            <person name="Song L."/>
            <person name="White J."/>
            <person name="Yuan X."/>
            <person name="Clifton S.W."/>
            <person name="Roe B.A."/>
            <person name="McLaughlin R.E."/>
        </authorList>
    </citation>
    <scope>NUCLEOTIDE SEQUENCE [LARGE SCALE GENOMIC DNA]</scope>
    <source>
        <strain>ATCC 700294 / SF370 / Serotype M1</strain>
    </source>
</reference>
<reference key="2">
    <citation type="journal article" date="2005" name="J. Infect. Dis.">
        <title>Evolutionary origin and emergence of a highly successful clone of serotype M1 group A Streptococcus involved multiple horizontal gene transfer events.</title>
        <authorList>
            <person name="Sumby P."/>
            <person name="Porcella S.F."/>
            <person name="Madrigal A.G."/>
            <person name="Barbian K.D."/>
            <person name="Virtaneva K."/>
            <person name="Ricklefs S.M."/>
            <person name="Sturdevant D.E."/>
            <person name="Graham M.R."/>
            <person name="Vuopio-Varkila J."/>
            <person name="Hoe N.P."/>
            <person name="Musser J.M."/>
        </authorList>
    </citation>
    <scope>NUCLEOTIDE SEQUENCE [LARGE SCALE GENOMIC DNA]</scope>
    <source>
        <strain>ATCC BAA-947 / MGAS5005 / Serotype M1</strain>
    </source>
</reference>
<evidence type="ECO:0000255" key="1">
    <source>
        <dbReference type="HAMAP-Rule" id="MF_01320"/>
    </source>
</evidence>
<evidence type="ECO:0000256" key="2">
    <source>
        <dbReference type="SAM" id="MobiDB-lite"/>
    </source>
</evidence>
<evidence type="ECO:0000305" key="3"/>
<accession>P60434</accession>
<accession>Q491Q2</accession>
<accession>Q9A1X1</accession>
<organism>
    <name type="scientific">Streptococcus pyogenes serotype M1</name>
    <dbReference type="NCBI Taxonomy" id="301447"/>
    <lineage>
        <taxon>Bacteria</taxon>
        <taxon>Bacillati</taxon>
        <taxon>Bacillota</taxon>
        <taxon>Bacilli</taxon>
        <taxon>Lactobacillales</taxon>
        <taxon>Streptococcaceae</taxon>
        <taxon>Streptococcus</taxon>
    </lineage>
</organism>
<name>RL2_STRP1</name>
<gene>
    <name evidence="1" type="primary">rplB</name>
    <name type="ordered locus">SPy_0052</name>
    <name type="ordered locus">M5005_Spy0047</name>
</gene>
<dbReference type="EMBL" id="AE004092">
    <property type="protein sequence ID" value="AAK33185.1"/>
    <property type="molecule type" value="Genomic_DNA"/>
</dbReference>
<dbReference type="EMBL" id="CP000017">
    <property type="protein sequence ID" value="AAZ50666.1"/>
    <property type="molecule type" value="Genomic_DNA"/>
</dbReference>
<dbReference type="RefSeq" id="NP_268463.1">
    <property type="nucleotide sequence ID" value="NC_002737.2"/>
</dbReference>
<dbReference type="SMR" id="P60434"/>
<dbReference type="PaxDb" id="1314-HKU360_00080"/>
<dbReference type="KEGG" id="spy:SPy_0052"/>
<dbReference type="KEGG" id="spz:M5005_Spy0047"/>
<dbReference type="PATRIC" id="fig|160490.10.peg.47"/>
<dbReference type="HOGENOM" id="CLU_036235_2_1_9"/>
<dbReference type="OMA" id="GGRHPCT"/>
<dbReference type="PRO" id="PR:P60434"/>
<dbReference type="Proteomes" id="UP000000750">
    <property type="component" value="Chromosome"/>
</dbReference>
<dbReference type="GO" id="GO:0015934">
    <property type="term" value="C:large ribosomal subunit"/>
    <property type="evidence" value="ECO:0007669"/>
    <property type="project" value="InterPro"/>
</dbReference>
<dbReference type="GO" id="GO:0019843">
    <property type="term" value="F:rRNA binding"/>
    <property type="evidence" value="ECO:0007669"/>
    <property type="project" value="UniProtKB-UniRule"/>
</dbReference>
<dbReference type="GO" id="GO:0003735">
    <property type="term" value="F:structural constituent of ribosome"/>
    <property type="evidence" value="ECO:0007669"/>
    <property type="project" value="InterPro"/>
</dbReference>
<dbReference type="GO" id="GO:0016740">
    <property type="term" value="F:transferase activity"/>
    <property type="evidence" value="ECO:0007669"/>
    <property type="project" value="InterPro"/>
</dbReference>
<dbReference type="GO" id="GO:0002181">
    <property type="term" value="P:cytoplasmic translation"/>
    <property type="evidence" value="ECO:0007669"/>
    <property type="project" value="TreeGrafter"/>
</dbReference>
<dbReference type="FunFam" id="2.30.30.30:FF:000001">
    <property type="entry name" value="50S ribosomal protein L2"/>
    <property type="match status" value="1"/>
</dbReference>
<dbReference type="FunFam" id="2.40.50.140:FF:000003">
    <property type="entry name" value="50S ribosomal protein L2"/>
    <property type="match status" value="1"/>
</dbReference>
<dbReference type="FunFam" id="4.10.950.10:FF:000001">
    <property type="entry name" value="50S ribosomal protein L2"/>
    <property type="match status" value="1"/>
</dbReference>
<dbReference type="Gene3D" id="2.30.30.30">
    <property type="match status" value="1"/>
</dbReference>
<dbReference type="Gene3D" id="2.40.50.140">
    <property type="entry name" value="Nucleic acid-binding proteins"/>
    <property type="match status" value="1"/>
</dbReference>
<dbReference type="Gene3D" id="4.10.950.10">
    <property type="entry name" value="Ribosomal protein L2, domain 3"/>
    <property type="match status" value="1"/>
</dbReference>
<dbReference type="HAMAP" id="MF_01320_B">
    <property type="entry name" value="Ribosomal_uL2_B"/>
    <property type="match status" value="1"/>
</dbReference>
<dbReference type="InterPro" id="IPR012340">
    <property type="entry name" value="NA-bd_OB-fold"/>
</dbReference>
<dbReference type="InterPro" id="IPR014722">
    <property type="entry name" value="Rib_uL2_dom2"/>
</dbReference>
<dbReference type="InterPro" id="IPR002171">
    <property type="entry name" value="Ribosomal_uL2"/>
</dbReference>
<dbReference type="InterPro" id="IPR005880">
    <property type="entry name" value="Ribosomal_uL2_bac/org-type"/>
</dbReference>
<dbReference type="InterPro" id="IPR022669">
    <property type="entry name" value="Ribosomal_uL2_C"/>
</dbReference>
<dbReference type="InterPro" id="IPR022671">
    <property type="entry name" value="Ribosomal_uL2_CS"/>
</dbReference>
<dbReference type="InterPro" id="IPR014726">
    <property type="entry name" value="Ribosomal_uL2_dom3"/>
</dbReference>
<dbReference type="InterPro" id="IPR022666">
    <property type="entry name" value="Ribosomal_uL2_RNA-bd_dom"/>
</dbReference>
<dbReference type="InterPro" id="IPR008991">
    <property type="entry name" value="Translation_prot_SH3-like_sf"/>
</dbReference>
<dbReference type="NCBIfam" id="TIGR01171">
    <property type="entry name" value="rplB_bact"/>
    <property type="match status" value="1"/>
</dbReference>
<dbReference type="PANTHER" id="PTHR13691:SF5">
    <property type="entry name" value="LARGE RIBOSOMAL SUBUNIT PROTEIN UL2M"/>
    <property type="match status" value="1"/>
</dbReference>
<dbReference type="PANTHER" id="PTHR13691">
    <property type="entry name" value="RIBOSOMAL PROTEIN L2"/>
    <property type="match status" value="1"/>
</dbReference>
<dbReference type="Pfam" id="PF00181">
    <property type="entry name" value="Ribosomal_L2"/>
    <property type="match status" value="1"/>
</dbReference>
<dbReference type="Pfam" id="PF03947">
    <property type="entry name" value="Ribosomal_L2_C"/>
    <property type="match status" value="1"/>
</dbReference>
<dbReference type="PIRSF" id="PIRSF002158">
    <property type="entry name" value="Ribosomal_L2"/>
    <property type="match status" value="1"/>
</dbReference>
<dbReference type="SMART" id="SM01383">
    <property type="entry name" value="Ribosomal_L2"/>
    <property type="match status" value="1"/>
</dbReference>
<dbReference type="SMART" id="SM01382">
    <property type="entry name" value="Ribosomal_L2_C"/>
    <property type="match status" value="1"/>
</dbReference>
<dbReference type="SUPFAM" id="SSF50249">
    <property type="entry name" value="Nucleic acid-binding proteins"/>
    <property type="match status" value="1"/>
</dbReference>
<dbReference type="SUPFAM" id="SSF50104">
    <property type="entry name" value="Translation proteins SH3-like domain"/>
    <property type="match status" value="1"/>
</dbReference>
<dbReference type="PROSITE" id="PS00467">
    <property type="entry name" value="RIBOSOMAL_L2"/>
    <property type="match status" value="1"/>
</dbReference>
<feature type="chain" id="PRO_0000129632" description="Large ribosomal subunit protein uL2">
    <location>
        <begin position="1"/>
        <end position="277"/>
    </location>
</feature>
<feature type="region of interest" description="Disordered" evidence="2">
    <location>
        <begin position="219"/>
        <end position="277"/>
    </location>
</feature>
<feature type="compositionally biased region" description="Basic and acidic residues" evidence="2">
    <location>
        <begin position="264"/>
        <end position="277"/>
    </location>
</feature>
<keyword id="KW-1185">Reference proteome</keyword>
<keyword id="KW-0687">Ribonucleoprotein</keyword>
<keyword id="KW-0689">Ribosomal protein</keyword>
<keyword id="KW-0694">RNA-binding</keyword>
<keyword id="KW-0699">rRNA-binding</keyword>